<sequence length="1450" mass="163401">MSSVAVPFYQRRHKHFDQSYRNIQTRYVLEEYAARKAASRQAAHYESTGLGKTTCRLCARRARSLAHEAMQESRKRTHEQKSHASDEKRIKFASELSSLEREIHMARHHAREQLDRLAIQRMVEENMALERHVVEEKISRAPEILVRLRSHTVWEKMSVRLCFTVQGFPSPVVQWYKNEELITPASDPAKYSVENKYGVHVLHINRADFDDSATYSAVATNIHGQASTNCAVVVRRFRESEEPHPAGIMPFHLPLSYDVCFTHFDVQFLEKFGVTFATEGETLTLKCSVLVTPELKRLRPRAEWYRDDVLIKDSKWTKLYFGEGQAALSFTHLNKDDEGLYTLRMVTKGGVNECSAFLFVRDADALIAGAPGAPMDVKCHDANRDYVIVTWKPPNTTSQNPVIGYFVDKCEVGLENWVQCNDAPVKICKYPVTGLYEGRSYIFRVRAVNSAGISRPSRVSEPVAALDPVDLERTQTVHVDEGRKIVISKDDLEGDIQIPGPPTNVHASEISKTYVVLSWDPPVPRGREPLTYFIEKSMVGSGSWQRVNAQVAVKSPRYAVFDLAEGKPYVFRVLSANKHGISDPSEITEPIQPQDIVVVPSAPGRVVATRNTKTSVVVQWDKPKHEENLYGYYIDYSVVGSNQWEPANHKPINYNRFVVHGLETGEQYIFRVKAVNAVGFSENSQESEAIKVQAALTCPSYPHGITLLNCDGHSMTLGWKAPKYSGGSPILGYYIDKREANHKNWHEVNSSVISRTIYTVEDLTEDAFYEFKIAAANVVGIGHPSDPSEHFKCKAWTMPEPGPAYDLTVCEVRNTSLVLLWKAPVYEGKSPITGYLVDYKEVDTEDWITANEKPTSHRYFKVTDLHQGHTYVFKVRAVNDAGVGKSSEISEPVFVEASPGTKEIFSGVDEEGNIYLGFECKEATDASHFLWGKSYEEIEDSDKFKIETKGDHSKLYFKHPDKSDLGTYCISVSDTDGVSSSFVLDEEELERLMTLSNEIKNPTIPLKSELAYEVLDKGEVRFWIQAESLSPNSTYRFVINDKEVENGDRHKISCDHSNGIIEMVMDKFTIDNEGTYTVQIQDGKAKNQSSLVLIGDAFKAILAESELQRKEFLRKQGPHFSEFLYWEVTEECEVLLACKIANTKKETVFKWYRNGSGIDVDEAPDLQKGECHLTVPKLSRKDEGVYKATLSDDRGHDVSTLELSGKVYNDIILALSRVSGKTASPLKILCTEEGIRLQCFLKYYNEEMKVTWSHRESKISSGEKMKIGGGEDVAWLQITEPTEKDKGNYTFEIFSDKESFKRTLDLSGQAFDDALTEFQRLKAAAFAEKNRGKVIGGLPDVVTIMDGKTLNLTCTVFGNPDPEVVWFKNDKALELNEHYLVSLEQGKYASLTIKGVTSEDSGKYSIYVKNKYGGETVDVTVSVYRHGEKIPEVNQGQLAKPRLIPPSSST</sequence>
<name>MPSF_CHICK</name>
<accession>Q02173</accession>
<protein>
    <recommendedName>
        <fullName>M-protein, striated muscle</fullName>
    </recommendedName>
</protein>
<reference key="1">
    <citation type="journal article" date="1992" name="J. Biol. Chem.">
        <title>Complete primary structure and tissue expression of chicken pectoralis M-protein.</title>
        <authorList>
            <person name="Noguchi J."/>
            <person name="Yanagisawa M."/>
            <person name="Imamura M."/>
            <person name="Kasuya Y."/>
            <person name="Sakurai T."/>
            <person name="Tanaka T."/>
            <person name="Masaki T."/>
        </authorList>
    </citation>
    <scope>NUCLEOTIDE SEQUENCE [MRNA]</scope>
    <source>
        <tissue>Embryonic pectoralis muscle</tissue>
    </source>
</reference>
<proteinExistence type="evidence at transcript level"/>
<evidence type="ECO:0000255" key="1">
    <source>
        <dbReference type="PROSITE-ProRule" id="PRU00316"/>
    </source>
</evidence>
<evidence type="ECO:0000256" key="2">
    <source>
        <dbReference type="SAM" id="MobiDB-lite"/>
    </source>
</evidence>
<feature type="chain" id="PRO_0000072683" description="M-protein, striated muscle">
    <location>
        <begin position="1"/>
        <end position="1450"/>
    </location>
</feature>
<feature type="domain" description="Ig-like C2-type 1">
    <location>
        <begin position="142"/>
        <end position="233"/>
    </location>
</feature>
<feature type="domain" description="Ig-like C2-type 2">
    <location>
        <begin position="254"/>
        <end position="359"/>
    </location>
</feature>
<feature type="domain" description="Fibronectin type-III 1" evidence="1">
    <location>
        <begin position="373"/>
        <end position="468"/>
    </location>
</feature>
<feature type="domain" description="Fibronectin type-III 2" evidence="1">
    <location>
        <begin position="501"/>
        <end position="596"/>
    </location>
</feature>
<feature type="domain" description="Fibronectin type-III 3" evidence="1">
    <location>
        <begin position="602"/>
        <end position="695"/>
    </location>
</feature>
<feature type="domain" description="Fibronectin type-III 4" evidence="1">
    <location>
        <begin position="698"/>
        <end position="800"/>
    </location>
</feature>
<feature type="domain" description="Fibronectin type-III 5" evidence="1">
    <location>
        <begin position="803"/>
        <end position="900"/>
    </location>
</feature>
<feature type="domain" description="Ig-like C2-type 3">
    <location>
        <begin position="899"/>
        <end position="995"/>
    </location>
</feature>
<feature type="domain" description="Ig-like C2-type 4">
    <location>
        <begin position="1002"/>
        <end position="1115"/>
    </location>
</feature>
<feature type="domain" description="Ig-like C2-type 5">
    <location>
        <begin position="1118"/>
        <end position="1204"/>
    </location>
</feature>
<feature type="domain" description="Ig-like C2-type 6">
    <location>
        <begin position="1225"/>
        <end position="1322"/>
    </location>
</feature>
<feature type="domain" description="Ig-like C2-type 7">
    <location>
        <begin position="1333"/>
        <end position="1422"/>
    </location>
</feature>
<feature type="region of interest" description="Disordered" evidence="2">
    <location>
        <begin position="66"/>
        <end position="87"/>
    </location>
</feature>
<dbReference type="EMBL" id="D11474">
    <property type="protein sequence ID" value="BAA02033.1"/>
    <property type="molecule type" value="mRNA"/>
</dbReference>
<dbReference type="PIR" id="A44027">
    <property type="entry name" value="A44027"/>
</dbReference>
<dbReference type="RefSeq" id="NP_990466.1">
    <property type="nucleotide sequence ID" value="NM_205135.1"/>
</dbReference>
<dbReference type="SMR" id="Q02173"/>
<dbReference type="FunCoup" id="Q02173">
    <property type="interactions" value="50"/>
</dbReference>
<dbReference type="STRING" id="9031.ENSGALP00000026310"/>
<dbReference type="PaxDb" id="9031-ENSGALP00000026310"/>
<dbReference type="GeneID" id="396034"/>
<dbReference type="KEGG" id="gga:396034"/>
<dbReference type="CTD" id="9172"/>
<dbReference type="VEuPathDB" id="HostDB:geneid_396034"/>
<dbReference type="eggNOG" id="ENOG502QS6D">
    <property type="taxonomic scope" value="Eukaryota"/>
</dbReference>
<dbReference type="InParanoid" id="Q02173"/>
<dbReference type="OrthoDB" id="504170at2759"/>
<dbReference type="PhylomeDB" id="Q02173"/>
<dbReference type="PRO" id="PR:Q02173"/>
<dbReference type="Proteomes" id="UP000000539">
    <property type="component" value="Unassembled WGS sequence"/>
</dbReference>
<dbReference type="GO" id="GO:0031430">
    <property type="term" value="C:M band"/>
    <property type="evidence" value="ECO:0000318"/>
    <property type="project" value="GO_Central"/>
</dbReference>
<dbReference type="GO" id="GO:0045214">
    <property type="term" value="P:sarcomere organization"/>
    <property type="evidence" value="ECO:0000318"/>
    <property type="project" value="GO_Central"/>
</dbReference>
<dbReference type="CDD" id="cd00063">
    <property type="entry name" value="FN3"/>
    <property type="match status" value="5"/>
</dbReference>
<dbReference type="CDD" id="cd00096">
    <property type="entry name" value="Ig"/>
    <property type="match status" value="2"/>
</dbReference>
<dbReference type="CDD" id="cd05891">
    <property type="entry name" value="IgI_M-protein_C"/>
    <property type="match status" value="1"/>
</dbReference>
<dbReference type="CDD" id="cd20951">
    <property type="entry name" value="IgI_titin_I1-like"/>
    <property type="match status" value="1"/>
</dbReference>
<dbReference type="FunFam" id="2.60.40.10:FF:000069">
    <property type="entry name" value="Alpha-protein kinase 3"/>
    <property type="match status" value="1"/>
</dbReference>
<dbReference type="FunFam" id="2.60.40.10:FF:000029">
    <property type="entry name" value="Myomesin 1"/>
    <property type="match status" value="3"/>
</dbReference>
<dbReference type="FunFam" id="2.60.40.10:FF:000124">
    <property type="entry name" value="Myomesin 1"/>
    <property type="match status" value="1"/>
</dbReference>
<dbReference type="FunFam" id="2.60.40.10:FF:000134">
    <property type="entry name" value="Myomesin 1"/>
    <property type="match status" value="1"/>
</dbReference>
<dbReference type="FunFam" id="2.60.40.10:FF:000192">
    <property type="entry name" value="Myomesin 1"/>
    <property type="match status" value="1"/>
</dbReference>
<dbReference type="FunFam" id="2.60.40.10:FF:000197">
    <property type="entry name" value="Myomesin 1"/>
    <property type="match status" value="1"/>
</dbReference>
<dbReference type="FunFam" id="2.60.40.10:FF:000222">
    <property type="entry name" value="Myomesin 1"/>
    <property type="match status" value="1"/>
</dbReference>
<dbReference type="FunFam" id="2.60.40.10:FF:000233">
    <property type="entry name" value="Myomesin 1"/>
    <property type="match status" value="1"/>
</dbReference>
<dbReference type="FunFam" id="2.60.40.10:FF:000179">
    <property type="entry name" value="Myomesin 2"/>
    <property type="match status" value="1"/>
</dbReference>
<dbReference type="FunFam" id="2.60.40.10:FF:000670">
    <property type="entry name" value="Myomesin 2"/>
    <property type="match status" value="1"/>
</dbReference>
<dbReference type="Gene3D" id="2.60.40.10">
    <property type="entry name" value="Immunoglobulins"/>
    <property type="match status" value="12"/>
</dbReference>
<dbReference type="InterPro" id="IPR003961">
    <property type="entry name" value="FN3_dom"/>
</dbReference>
<dbReference type="InterPro" id="IPR036116">
    <property type="entry name" value="FN3_sf"/>
</dbReference>
<dbReference type="InterPro" id="IPR007110">
    <property type="entry name" value="Ig-like_dom"/>
</dbReference>
<dbReference type="InterPro" id="IPR036179">
    <property type="entry name" value="Ig-like_dom_sf"/>
</dbReference>
<dbReference type="InterPro" id="IPR013783">
    <property type="entry name" value="Ig-like_fold"/>
</dbReference>
<dbReference type="InterPro" id="IPR013098">
    <property type="entry name" value="Ig_I-set"/>
</dbReference>
<dbReference type="InterPro" id="IPR003599">
    <property type="entry name" value="Ig_sub"/>
</dbReference>
<dbReference type="InterPro" id="IPR003598">
    <property type="entry name" value="Ig_sub2"/>
</dbReference>
<dbReference type="InterPro" id="IPR050964">
    <property type="entry name" value="Striated_Muscle_Regulatory"/>
</dbReference>
<dbReference type="PANTHER" id="PTHR13817:SF49">
    <property type="entry name" value="MYOSIN-BINDING PROTEIN H"/>
    <property type="match status" value="1"/>
</dbReference>
<dbReference type="PANTHER" id="PTHR13817">
    <property type="entry name" value="TITIN"/>
    <property type="match status" value="1"/>
</dbReference>
<dbReference type="Pfam" id="PF00041">
    <property type="entry name" value="fn3"/>
    <property type="match status" value="5"/>
</dbReference>
<dbReference type="Pfam" id="PF07679">
    <property type="entry name" value="I-set"/>
    <property type="match status" value="3"/>
</dbReference>
<dbReference type="PRINTS" id="PR00014">
    <property type="entry name" value="FNTYPEIII"/>
</dbReference>
<dbReference type="SMART" id="SM00060">
    <property type="entry name" value="FN3"/>
    <property type="match status" value="5"/>
</dbReference>
<dbReference type="SMART" id="SM00409">
    <property type="entry name" value="IG"/>
    <property type="match status" value="5"/>
</dbReference>
<dbReference type="SMART" id="SM00408">
    <property type="entry name" value="IGc2"/>
    <property type="match status" value="4"/>
</dbReference>
<dbReference type="SUPFAM" id="SSF49265">
    <property type="entry name" value="Fibronectin type III"/>
    <property type="match status" value="3"/>
</dbReference>
<dbReference type="SUPFAM" id="SSF48726">
    <property type="entry name" value="Immunoglobulin"/>
    <property type="match status" value="7"/>
</dbReference>
<dbReference type="PROSITE" id="PS50853">
    <property type="entry name" value="FN3"/>
    <property type="match status" value="5"/>
</dbReference>
<dbReference type="PROSITE" id="PS50835">
    <property type="entry name" value="IG_LIKE"/>
    <property type="match status" value="4"/>
</dbReference>
<organism>
    <name type="scientific">Gallus gallus</name>
    <name type="common">Chicken</name>
    <dbReference type="NCBI Taxonomy" id="9031"/>
    <lineage>
        <taxon>Eukaryota</taxon>
        <taxon>Metazoa</taxon>
        <taxon>Chordata</taxon>
        <taxon>Craniata</taxon>
        <taxon>Vertebrata</taxon>
        <taxon>Euteleostomi</taxon>
        <taxon>Archelosauria</taxon>
        <taxon>Archosauria</taxon>
        <taxon>Dinosauria</taxon>
        <taxon>Saurischia</taxon>
        <taxon>Theropoda</taxon>
        <taxon>Coelurosauria</taxon>
        <taxon>Aves</taxon>
        <taxon>Neognathae</taxon>
        <taxon>Galloanserae</taxon>
        <taxon>Galliformes</taxon>
        <taxon>Phasianidae</taxon>
        <taxon>Phasianinae</taxon>
        <taxon>Gallus</taxon>
    </lineage>
</organism>
<comment type="function">
    <text>Is a structural constituent of myofibrillar M-band in striated muscle.</text>
</comment>
<comment type="tissue specificity">
    <text>Expressed in pectoralis and cardiac muscle.</text>
</comment>
<comment type="developmental stage">
    <text>Can be detected by day 10-13 in ovo, the content is gradually increased throughout the ovo development and reached its peak after hatching.</text>
</comment>
<keyword id="KW-0393">Immunoglobulin domain</keyword>
<keyword id="KW-0514">Muscle protein</keyword>
<keyword id="KW-1185">Reference proteome</keyword>
<keyword id="KW-0677">Repeat</keyword>